<protein>
    <recommendedName>
        <fullName evidence="1">ATP-dependent helicase/deoxyribonuclease subunit B</fullName>
        <ecNumber evidence="1">3.1.-.-</ecNumber>
    </recommendedName>
    <alternativeName>
        <fullName evidence="1">ATP-dependent helicase/nuclease subunit AddB</fullName>
    </alternativeName>
</protein>
<gene>
    <name evidence="1" type="primary">addB</name>
    <name type="synonym">rexB</name>
    <name type="ordered locus">SACOL0970</name>
</gene>
<proteinExistence type="inferred from homology"/>
<sequence length="1158" mass="134491">MTLHAYLGRAGTGKSTKMLTEIKQKMKADPLGDPIILIAPTQSTFQLEQAFVNDPELNGSLRTEVLHFERLSHRIFQEVGSYSEQKLSKAATEMMIYNIVQEQQKYLKLYQSQAKYYGFSEKLTEQIQDFKKYAVTPEHLEHFIADKNMQTRTKNKLEDIALIYREFEQRIQNEFITGEDSLQYFIDCMPKSEWLKRADIYIDGFHNFSTIEYLIIKGLIKYAKSVTIILTTDGNHDQFSLFRKPSEVLRHIEEIANELNISIERQYFNQLYRFNNQDLKHLEQEFDALQINRVACQGHINILESATMREEINEIARRIIVDIRDKQLRYQDIAILYRDESYAYLFDSILPLYNIPYNIDTKRSMTHHPVMEMIRSLIEVIQSNWQVNPMLRLLKTDVLTASYLKSAYLVDLLENFVLERGIYGKRWLDDELFNVEHFSKMGRKGHKLTEDERNTFEQVVKLKKDVIDKILHFEKQMSQAETVKDFATAFYESMEYFELPNQLMTERDELDLNGNHEKAEEIDQIWNGLIQILDDLVLVFGDEPMSMERFLEVFDIGLEQLEFVMIPQTLDQVSIGTMDLAKVDNKQHVYLVGMNDGTMPQPVTASSLITDEEKKYFEQQANVELSPTSDILQMDEAFVCYVAMTRAKGDVTFSYSLMGSSGDDKEISPFLNQIQSLFNQLEITNIPQYHEVNPLSLMQHAKQTKITLFEALRAWLYDEIVADSWLDAYQVIRDSDHLNQGLDYLMSALTFDNETVKLGETLSKDLYGKEINASVSRFEGYQQCPFKHYASHGLKLNERTKYELQNFDLGDIFHSVLKYISERINGDFKQLDLKKIRQLTNEALEEILPKVQFNLLNSSAYYRYLSRRIGAIVETTLSALKYQGTYSKFMPKHFETSFRRKPRTNDELIAQTLTTTQGIPINIRGQIDRIDTYTKNDTSFVNIIDYKSSEGSATLDLTKVYYGMQMQMMTYMDIVLQNKQRLGLTDIVKPGGLLYFHVHEPRIKFKSWSDIDEDKLEQDLIKKFKLSGLVNADQTVIDALDIRLEPKFTSDIVPVGLNKDGSLSKRGSQVADEATIYKFIQHNKENFIETASNIMDGHTEVAPLKYKQKLPCAFCSYQSVCHVDGMIDSKRYRTVDETINPIEAIQNININDEFGGEQ</sequence>
<reference key="1">
    <citation type="journal article" date="2005" name="J. Bacteriol.">
        <title>Insights on evolution of virulence and resistance from the complete genome analysis of an early methicillin-resistant Staphylococcus aureus strain and a biofilm-producing methicillin-resistant Staphylococcus epidermidis strain.</title>
        <authorList>
            <person name="Gill S.R."/>
            <person name="Fouts D.E."/>
            <person name="Archer G.L."/>
            <person name="Mongodin E.F."/>
            <person name="DeBoy R.T."/>
            <person name="Ravel J."/>
            <person name="Paulsen I.T."/>
            <person name="Kolonay J.F."/>
            <person name="Brinkac L.M."/>
            <person name="Beanan M.J."/>
            <person name="Dodson R.J."/>
            <person name="Daugherty S.C."/>
            <person name="Madupu R."/>
            <person name="Angiuoli S.V."/>
            <person name="Durkin A.S."/>
            <person name="Haft D.H."/>
            <person name="Vamathevan J.J."/>
            <person name="Khouri H."/>
            <person name="Utterback T.R."/>
            <person name="Lee C."/>
            <person name="Dimitrov G."/>
            <person name="Jiang L."/>
            <person name="Qin H."/>
            <person name="Weidman J."/>
            <person name="Tran K."/>
            <person name="Kang K.H."/>
            <person name="Hance I.R."/>
            <person name="Nelson K.E."/>
            <person name="Fraser C.M."/>
        </authorList>
    </citation>
    <scope>NUCLEOTIDE SEQUENCE [LARGE SCALE GENOMIC DNA]</scope>
    <source>
        <strain>COL</strain>
    </source>
</reference>
<dbReference type="EC" id="3.1.-.-" evidence="1"/>
<dbReference type="EMBL" id="CP000046">
    <property type="protein sequence ID" value="AAW37938.1"/>
    <property type="molecule type" value="Genomic_DNA"/>
</dbReference>
<dbReference type="RefSeq" id="WP_000172345.1">
    <property type="nucleotide sequence ID" value="NZ_JBGOFO010000002.1"/>
</dbReference>
<dbReference type="SMR" id="Q5HHB8"/>
<dbReference type="KEGG" id="sac:SACOL0970"/>
<dbReference type="HOGENOM" id="CLU_007838_0_0_9"/>
<dbReference type="Proteomes" id="UP000000530">
    <property type="component" value="Chromosome"/>
</dbReference>
<dbReference type="GO" id="GO:0051539">
    <property type="term" value="F:4 iron, 4 sulfur cluster binding"/>
    <property type="evidence" value="ECO:0007669"/>
    <property type="project" value="UniProtKB-KW"/>
</dbReference>
<dbReference type="GO" id="GO:0008409">
    <property type="term" value="F:5'-3' exonuclease activity"/>
    <property type="evidence" value="ECO:0007669"/>
    <property type="project" value="UniProtKB-UniRule"/>
</dbReference>
<dbReference type="GO" id="GO:0005524">
    <property type="term" value="F:ATP binding"/>
    <property type="evidence" value="ECO:0007669"/>
    <property type="project" value="UniProtKB-UniRule"/>
</dbReference>
<dbReference type="GO" id="GO:0003690">
    <property type="term" value="F:double-stranded DNA binding"/>
    <property type="evidence" value="ECO:0007669"/>
    <property type="project" value="UniProtKB-UniRule"/>
</dbReference>
<dbReference type="GO" id="GO:0004386">
    <property type="term" value="F:helicase activity"/>
    <property type="evidence" value="ECO:0007669"/>
    <property type="project" value="UniProtKB-KW"/>
</dbReference>
<dbReference type="GO" id="GO:0046872">
    <property type="term" value="F:metal ion binding"/>
    <property type="evidence" value="ECO:0007669"/>
    <property type="project" value="UniProtKB-KW"/>
</dbReference>
<dbReference type="GO" id="GO:0000724">
    <property type="term" value="P:double-strand break repair via homologous recombination"/>
    <property type="evidence" value="ECO:0007669"/>
    <property type="project" value="UniProtKB-UniRule"/>
</dbReference>
<dbReference type="Gene3D" id="3.90.320.10">
    <property type="match status" value="1"/>
</dbReference>
<dbReference type="Gene3D" id="3.40.50.300">
    <property type="entry name" value="P-loop containing nucleotide triphosphate hydrolases"/>
    <property type="match status" value="4"/>
</dbReference>
<dbReference type="HAMAP" id="MF_01452">
    <property type="entry name" value="AddB_type1"/>
    <property type="match status" value="1"/>
</dbReference>
<dbReference type="InterPro" id="IPR049035">
    <property type="entry name" value="ADDB_N"/>
</dbReference>
<dbReference type="InterPro" id="IPR014140">
    <property type="entry name" value="DNA_helicase_suAddB"/>
</dbReference>
<dbReference type="InterPro" id="IPR014017">
    <property type="entry name" value="DNA_helicase_UvrD-like_C"/>
</dbReference>
<dbReference type="InterPro" id="IPR027417">
    <property type="entry name" value="P-loop_NTPase"/>
</dbReference>
<dbReference type="InterPro" id="IPR011604">
    <property type="entry name" value="PDDEXK-like_dom_sf"/>
</dbReference>
<dbReference type="InterPro" id="IPR038726">
    <property type="entry name" value="PDDEXK_AddAB-type"/>
</dbReference>
<dbReference type="NCBIfam" id="TIGR02773">
    <property type="entry name" value="addB_Gpos"/>
    <property type="match status" value="1"/>
</dbReference>
<dbReference type="PANTHER" id="PTHR30591">
    <property type="entry name" value="RECBCD ENZYME SUBUNIT RECC"/>
    <property type="match status" value="1"/>
</dbReference>
<dbReference type="PANTHER" id="PTHR30591:SF1">
    <property type="entry name" value="RECBCD ENZYME SUBUNIT RECC"/>
    <property type="match status" value="1"/>
</dbReference>
<dbReference type="Pfam" id="PF21445">
    <property type="entry name" value="ADDB_N"/>
    <property type="match status" value="1"/>
</dbReference>
<dbReference type="Pfam" id="PF12705">
    <property type="entry name" value="PDDEXK_1"/>
    <property type="match status" value="1"/>
</dbReference>
<dbReference type="SUPFAM" id="SSF52540">
    <property type="entry name" value="P-loop containing nucleoside triphosphate hydrolases"/>
    <property type="match status" value="1"/>
</dbReference>
<dbReference type="PROSITE" id="PS51198">
    <property type="entry name" value="UVRD_HELICASE_ATP_BIND"/>
    <property type="match status" value="1"/>
</dbReference>
<dbReference type="PROSITE" id="PS51217">
    <property type="entry name" value="UVRD_HELICASE_CTER"/>
    <property type="match status" value="1"/>
</dbReference>
<name>ADDB_STAAC</name>
<comment type="function">
    <text evidence="1">The heterodimer acts as both an ATP-dependent DNA helicase and an ATP-dependent, dual-direction single-stranded exonuclease. Recognizes the chi site generating a DNA molecule suitable for the initiation of homologous recombination. The AddB subunit has 5' -&gt; 3' nuclease activity but not helicase activity.</text>
</comment>
<comment type="cofactor">
    <cofactor evidence="1">
        <name>Mg(2+)</name>
        <dbReference type="ChEBI" id="CHEBI:18420"/>
    </cofactor>
</comment>
<comment type="cofactor">
    <cofactor evidence="1">
        <name>[4Fe-4S] cluster</name>
        <dbReference type="ChEBI" id="CHEBI:49883"/>
    </cofactor>
    <text evidence="1">Binds 1 [4Fe-4S] cluster.</text>
</comment>
<comment type="subunit">
    <text evidence="1">Heterodimer of AddA and AddB.</text>
</comment>
<comment type="miscellaneous">
    <text evidence="1">Despite having conserved helicase domains, this subunit does not have helicase activity.</text>
</comment>
<comment type="similarity">
    <text evidence="1">Belongs to the helicase family. AddB/RexB type 1 subfamily.</text>
</comment>
<evidence type="ECO:0000255" key="1">
    <source>
        <dbReference type="HAMAP-Rule" id="MF_01452"/>
    </source>
</evidence>
<accession>Q5HHB8</accession>
<keyword id="KW-0004">4Fe-4S</keyword>
<keyword id="KW-0067">ATP-binding</keyword>
<keyword id="KW-0227">DNA damage</keyword>
<keyword id="KW-0234">DNA repair</keyword>
<keyword id="KW-0238">DNA-binding</keyword>
<keyword id="KW-0269">Exonuclease</keyword>
<keyword id="KW-0347">Helicase</keyword>
<keyword id="KW-0378">Hydrolase</keyword>
<keyword id="KW-0408">Iron</keyword>
<keyword id="KW-0411">Iron-sulfur</keyword>
<keyword id="KW-0479">Metal-binding</keyword>
<keyword id="KW-0540">Nuclease</keyword>
<keyword id="KW-0547">Nucleotide-binding</keyword>
<organism>
    <name type="scientific">Staphylococcus aureus (strain COL)</name>
    <dbReference type="NCBI Taxonomy" id="93062"/>
    <lineage>
        <taxon>Bacteria</taxon>
        <taxon>Bacillati</taxon>
        <taxon>Bacillota</taxon>
        <taxon>Bacilli</taxon>
        <taxon>Bacillales</taxon>
        <taxon>Staphylococcaceae</taxon>
        <taxon>Staphylococcus</taxon>
    </lineage>
</organism>
<feature type="chain" id="PRO_0000379205" description="ATP-dependent helicase/deoxyribonuclease subunit B">
    <location>
        <begin position="1"/>
        <end position="1158"/>
    </location>
</feature>
<feature type="domain" description="UvrD-like helicase ATP-binding" evidence="1">
    <location>
        <begin position="1"/>
        <end position="275"/>
    </location>
</feature>
<feature type="domain" description="UvrD-like helicase C-terminal" evidence="1">
    <location>
        <begin position="269"/>
        <end position="583"/>
    </location>
</feature>
<feature type="binding site" evidence="1">
    <location>
        <begin position="8"/>
        <end position="15"/>
    </location>
    <ligand>
        <name>ATP</name>
        <dbReference type="ChEBI" id="CHEBI:30616"/>
    </ligand>
</feature>
<feature type="binding site" evidence="1">
    <location>
        <position position="784"/>
    </location>
    <ligand>
        <name>[4Fe-4S] cluster</name>
        <dbReference type="ChEBI" id="CHEBI:49883"/>
    </ligand>
</feature>
<feature type="binding site" evidence="1">
    <location>
        <position position="1112"/>
    </location>
    <ligand>
        <name>[4Fe-4S] cluster</name>
        <dbReference type="ChEBI" id="CHEBI:49883"/>
    </ligand>
</feature>
<feature type="binding site" evidence="1">
    <location>
        <position position="1115"/>
    </location>
    <ligand>
        <name>[4Fe-4S] cluster</name>
        <dbReference type="ChEBI" id="CHEBI:49883"/>
    </ligand>
</feature>
<feature type="binding site" evidence="1">
    <location>
        <position position="1121"/>
    </location>
    <ligand>
        <name>[4Fe-4S] cluster</name>
        <dbReference type="ChEBI" id="CHEBI:49883"/>
    </ligand>
</feature>